<protein>
    <recommendedName>
        <fullName evidence="2">Small ribosomal subunit protein uS12</fullName>
    </recommendedName>
    <alternativeName>
        <fullName evidence="3">30S ribosomal protein S12</fullName>
    </alternativeName>
</protein>
<sequence>MPTINQLIRKERQKVVKKSKSPALVSCPQRRGVCTRVYTTTPKKPNSALRKVAKVRLTSGFEVISYIMGEGHNLQEHSIVLVRGGRIKDLPGVKYHIVRGALDTAGVANRTVSRSKYGTKRPKVKK</sequence>
<dbReference type="EMBL" id="CP000153">
    <property type="protein sequence ID" value="ABB43636.1"/>
    <property type="molecule type" value="Genomic_DNA"/>
</dbReference>
<dbReference type="RefSeq" id="WP_011371990.1">
    <property type="nucleotide sequence ID" value="NC_007575.1"/>
</dbReference>
<dbReference type="SMR" id="Q30TP5"/>
<dbReference type="STRING" id="326298.Suden_0355"/>
<dbReference type="KEGG" id="tdn:Suden_0355"/>
<dbReference type="eggNOG" id="COG0048">
    <property type="taxonomic scope" value="Bacteria"/>
</dbReference>
<dbReference type="HOGENOM" id="CLU_104295_1_2_7"/>
<dbReference type="OrthoDB" id="9802366at2"/>
<dbReference type="Proteomes" id="UP000002714">
    <property type="component" value="Chromosome"/>
</dbReference>
<dbReference type="GO" id="GO:0015935">
    <property type="term" value="C:small ribosomal subunit"/>
    <property type="evidence" value="ECO:0007669"/>
    <property type="project" value="InterPro"/>
</dbReference>
<dbReference type="GO" id="GO:0019843">
    <property type="term" value="F:rRNA binding"/>
    <property type="evidence" value="ECO:0007669"/>
    <property type="project" value="UniProtKB-UniRule"/>
</dbReference>
<dbReference type="GO" id="GO:0003735">
    <property type="term" value="F:structural constituent of ribosome"/>
    <property type="evidence" value="ECO:0007669"/>
    <property type="project" value="InterPro"/>
</dbReference>
<dbReference type="GO" id="GO:0000049">
    <property type="term" value="F:tRNA binding"/>
    <property type="evidence" value="ECO:0007669"/>
    <property type="project" value="UniProtKB-UniRule"/>
</dbReference>
<dbReference type="GO" id="GO:0006412">
    <property type="term" value="P:translation"/>
    <property type="evidence" value="ECO:0007669"/>
    <property type="project" value="UniProtKB-UniRule"/>
</dbReference>
<dbReference type="CDD" id="cd03368">
    <property type="entry name" value="Ribosomal_S12"/>
    <property type="match status" value="1"/>
</dbReference>
<dbReference type="FunFam" id="2.40.50.140:FF:000001">
    <property type="entry name" value="30S ribosomal protein S12"/>
    <property type="match status" value="1"/>
</dbReference>
<dbReference type="Gene3D" id="2.40.50.140">
    <property type="entry name" value="Nucleic acid-binding proteins"/>
    <property type="match status" value="1"/>
</dbReference>
<dbReference type="HAMAP" id="MF_00403_B">
    <property type="entry name" value="Ribosomal_uS12_B"/>
    <property type="match status" value="1"/>
</dbReference>
<dbReference type="InterPro" id="IPR012340">
    <property type="entry name" value="NA-bd_OB-fold"/>
</dbReference>
<dbReference type="InterPro" id="IPR006032">
    <property type="entry name" value="Ribosomal_uS12"/>
</dbReference>
<dbReference type="InterPro" id="IPR005679">
    <property type="entry name" value="Ribosomal_uS12_bac"/>
</dbReference>
<dbReference type="NCBIfam" id="TIGR00981">
    <property type="entry name" value="rpsL_bact"/>
    <property type="match status" value="1"/>
</dbReference>
<dbReference type="PANTHER" id="PTHR11652">
    <property type="entry name" value="30S RIBOSOMAL PROTEIN S12 FAMILY MEMBER"/>
    <property type="match status" value="1"/>
</dbReference>
<dbReference type="Pfam" id="PF00164">
    <property type="entry name" value="Ribosom_S12_S23"/>
    <property type="match status" value="1"/>
</dbReference>
<dbReference type="PIRSF" id="PIRSF002133">
    <property type="entry name" value="Ribosomal_S12/S23"/>
    <property type="match status" value="1"/>
</dbReference>
<dbReference type="PRINTS" id="PR01034">
    <property type="entry name" value="RIBOSOMALS12"/>
</dbReference>
<dbReference type="SUPFAM" id="SSF50249">
    <property type="entry name" value="Nucleic acid-binding proteins"/>
    <property type="match status" value="1"/>
</dbReference>
<dbReference type="PROSITE" id="PS00055">
    <property type="entry name" value="RIBOSOMAL_S12"/>
    <property type="match status" value="1"/>
</dbReference>
<evidence type="ECO:0000250" key="1"/>
<evidence type="ECO:0000255" key="2">
    <source>
        <dbReference type="HAMAP-Rule" id="MF_00403"/>
    </source>
</evidence>
<evidence type="ECO:0000305" key="3"/>
<comment type="function">
    <text evidence="2">With S4 and S5 plays an important role in translational accuracy.</text>
</comment>
<comment type="function">
    <text evidence="2">Interacts with and stabilizes bases of the 16S rRNA that are involved in tRNA selection in the A site and with the mRNA backbone. Located at the interface of the 30S and 50S subunits, it traverses the body of the 30S subunit contacting proteins on the other side and probably holding the rRNA structure together. The combined cluster of proteins S8, S12 and S17 appears to hold together the shoulder and platform of the 30S subunit.</text>
</comment>
<comment type="subunit">
    <text evidence="2">Part of the 30S ribosomal subunit. Contacts proteins S8 and S17. May interact with IF1 in the 30S initiation complex.</text>
</comment>
<comment type="similarity">
    <text evidence="2">Belongs to the universal ribosomal protein uS12 family.</text>
</comment>
<feature type="chain" id="PRO_0000238151" description="Small ribosomal subunit protein uS12">
    <location>
        <begin position="1"/>
        <end position="126"/>
    </location>
</feature>
<feature type="modified residue" description="3-methylthioaspartic acid" evidence="1">
    <location>
        <position position="89"/>
    </location>
</feature>
<proteinExistence type="inferred from homology"/>
<reference key="1">
    <citation type="journal article" date="2008" name="Appl. Environ. Microbiol.">
        <title>Genome of the epsilonproteobacterial chemolithoautotroph Sulfurimonas denitrificans.</title>
        <authorList>
            <person name="Sievert S.M."/>
            <person name="Scott K.M."/>
            <person name="Klotz M.G."/>
            <person name="Chain P.S.G."/>
            <person name="Hauser L.J."/>
            <person name="Hemp J."/>
            <person name="Huegler M."/>
            <person name="Land M."/>
            <person name="Lapidus A."/>
            <person name="Larimer F.W."/>
            <person name="Lucas S."/>
            <person name="Malfatti S.A."/>
            <person name="Meyer F."/>
            <person name="Paulsen I.T."/>
            <person name="Ren Q."/>
            <person name="Simon J."/>
            <person name="Bailey K."/>
            <person name="Diaz E."/>
            <person name="Fitzpatrick K.A."/>
            <person name="Glover B."/>
            <person name="Gwatney N."/>
            <person name="Korajkic A."/>
            <person name="Long A."/>
            <person name="Mobberley J.M."/>
            <person name="Pantry S.N."/>
            <person name="Pazder G."/>
            <person name="Peterson S."/>
            <person name="Quintanilla J.D."/>
            <person name="Sprinkle R."/>
            <person name="Stephens J."/>
            <person name="Thomas P."/>
            <person name="Vaughn R."/>
            <person name="Weber M.J."/>
            <person name="Wooten L.L."/>
        </authorList>
    </citation>
    <scope>NUCLEOTIDE SEQUENCE [LARGE SCALE GENOMIC DNA]</scope>
    <source>
        <strain>ATCC 33889 / DSM 1251</strain>
    </source>
</reference>
<gene>
    <name evidence="2" type="primary">rpsL</name>
    <name type="ordered locus">Suden_0355</name>
</gene>
<keyword id="KW-0488">Methylation</keyword>
<keyword id="KW-1185">Reference proteome</keyword>
<keyword id="KW-0687">Ribonucleoprotein</keyword>
<keyword id="KW-0689">Ribosomal protein</keyword>
<keyword id="KW-0694">RNA-binding</keyword>
<keyword id="KW-0699">rRNA-binding</keyword>
<keyword id="KW-0820">tRNA-binding</keyword>
<name>RS12_SULDN</name>
<accession>Q30TP5</accession>
<organism>
    <name type="scientific">Sulfurimonas denitrificans (strain ATCC 33889 / DSM 1251)</name>
    <name type="common">Thiomicrospira denitrificans (strain ATCC 33889 / DSM 1251)</name>
    <dbReference type="NCBI Taxonomy" id="326298"/>
    <lineage>
        <taxon>Bacteria</taxon>
        <taxon>Pseudomonadati</taxon>
        <taxon>Campylobacterota</taxon>
        <taxon>Epsilonproteobacteria</taxon>
        <taxon>Campylobacterales</taxon>
        <taxon>Sulfurimonadaceae</taxon>
        <taxon>Sulfurimonas</taxon>
    </lineage>
</organism>